<feature type="peptide" id="PRO_0000378781" description="Periviscerokinin-2" evidence="2">
    <location>
        <begin position="1"/>
        <end position="11"/>
    </location>
</feature>
<feature type="modified residue" description="Valine amide" evidence="2">
    <location>
        <position position="11"/>
    </location>
</feature>
<reference evidence="4" key="1">
    <citation type="journal article" date="2009" name="BMC Evol. Biol.">
        <title>A proteomic approach for studying insect phylogeny: CAPA peptides of ancient insect taxa (Dictyoptera, Blattoptera) as a test case.</title>
        <authorList>
            <person name="Roth S."/>
            <person name="Fromm B."/>
            <person name="Gaede G."/>
            <person name="Predel R."/>
        </authorList>
    </citation>
    <scope>PROTEIN SEQUENCE</scope>
    <scope>AMIDATION AT VAL-11</scope>
    <source>
        <tissue evidence="2">Abdominal perisympathetic organs</tissue>
    </source>
</reference>
<accession>P85594</accession>
<sequence>GSSGLISMPRV</sequence>
<protein>
    <recommendedName>
        <fullName evidence="3">Periviscerokinin-2</fullName>
        <shortName evidence="3">DerAt-PVK-2</shortName>
    </recommendedName>
</protein>
<organism>
    <name type="scientific">Deropeltis atra</name>
    <name type="common">Cockroach</name>
    <dbReference type="NCBI Taxonomy" id="596120"/>
    <lineage>
        <taxon>Eukaryota</taxon>
        <taxon>Metazoa</taxon>
        <taxon>Ecdysozoa</taxon>
        <taxon>Arthropoda</taxon>
        <taxon>Hexapoda</taxon>
        <taxon>Insecta</taxon>
        <taxon>Pterygota</taxon>
        <taxon>Neoptera</taxon>
        <taxon>Polyneoptera</taxon>
        <taxon>Dictyoptera</taxon>
        <taxon>Blattodea</taxon>
        <taxon>Blattoidea</taxon>
        <taxon>Blattidae</taxon>
        <taxon>Blattinae</taxon>
        <taxon>Deropeltis</taxon>
    </lineage>
</organism>
<keyword id="KW-0027">Amidation</keyword>
<keyword id="KW-0903">Direct protein sequencing</keyword>
<keyword id="KW-0527">Neuropeptide</keyword>
<keyword id="KW-0964">Secreted</keyword>
<dbReference type="GO" id="GO:0005576">
    <property type="term" value="C:extracellular region"/>
    <property type="evidence" value="ECO:0007669"/>
    <property type="project" value="UniProtKB-SubCell"/>
</dbReference>
<dbReference type="GO" id="GO:0007218">
    <property type="term" value="P:neuropeptide signaling pathway"/>
    <property type="evidence" value="ECO:0007669"/>
    <property type="project" value="UniProtKB-KW"/>
</dbReference>
<dbReference type="InterPro" id="IPR013231">
    <property type="entry name" value="Periviscerokinin"/>
</dbReference>
<dbReference type="Pfam" id="PF08259">
    <property type="entry name" value="Periviscerokin"/>
    <property type="match status" value="1"/>
</dbReference>
<proteinExistence type="evidence at protein level"/>
<evidence type="ECO:0000255" key="1"/>
<evidence type="ECO:0000269" key="2">
    <source>
    </source>
</evidence>
<evidence type="ECO:0000303" key="3">
    <source>
    </source>
</evidence>
<evidence type="ECO:0000305" key="4"/>
<name>PVK2_DERAT</name>
<comment type="function">
    <text evidence="4">Mediates visceral muscle contractile activity (myotropic activity).</text>
</comment>
<comment type="subcellular location">
    <subcellularLocation>
        <location evidence="4">Secreted</location>
    </subcellularLocation>
</comment>
<comment type="similarity">
    <text evidence="1">Belongs to the periviscerokinin family.</text>
</comment>